<name>RS18_SYNJB</name>
<accession>Q2JL28</accession>
<protein>
    <recommendedName>
        <fullName evidence="1">Small ribosomal subunit protein bS18</fullName>
    </recommendedName>
    <alternativeName>
        <fullName evidence="2">30S ribosomal protein S18</fullName>
    </alternativeName>
</protein>
<proteinExistence type="inferred from homology"/>
<organism>
    <name type="scientific">Synechococcus sp. (strain JA-2-3B'a(2-13))</name>
    <name type="common">Cyanobacteria bacterium Yellowstone B-Prime</name>
    <dbReference type="NCBI Taxonomy" id="321332"/>
    <lineage>
        <taxon>Bacteria</taxon>
        <taxon>Bacillati</taxon>
        <taxon>Cyanobacteriota</taxon>
        <taxon>Cyanophyceae</taxon>
        <taxon>Synechococcales</taxon>
        <taxon>Synechococcaceae</taxon>
        <taxon>Synechococcus</taxon>
    </lineage>
</organism>
<sequence>MVYARRRLSPIKPGEPIRYTDVELLKKFVTERGKILPRRITGLTAKQQRELTAAIKRARIMGLLYFVNKEG</sequence>
<reference key="1">
    <citation type="journal article" date="2007" name="ISME J.">
        <title>Population level functional diversity in a microbial community revealed by comparative genomic and metagenomic analyses.</title>
        <authorList>
            <person name="Bhaya D."/>
            <person name="Grossman A.R."/>
            <person name="Steunou A.-S."/>
            <person name="Khuri N."/>
            <person name="Cohan F.M."/>
            <person name="Hamamura N."/>
            <person name="Melendrez M.C."/>
            <person name="Bateson M.M."/>
            <person name="Ward D.M."/>
            <person name="Heidelberg J.F."/>
        </authorList>
    </citation>
    <scope>NUCLEOTIDE SEQUENCE [LARGE SCALE GENOMIC DNA]</scope>
    <source>
        <strain>JA-2-3B'a(2-13)</strain>
    </source>
</reference>
<comment type="function">
    <text evidence="1">Binds as a heterodimer with protein bS6 to the central domain of the 16S rRNA, where it helps stabilize the platform of the 30S subunit.</text>
</comment>
<comment type="subunit">
    <text evidence="1">Part of the 30S ribosomal subunit. Forms a tight heterodimer with protein bS6.</text>
</comment>
<comment type="similarity">
    <text evidence="1">Belongs to the bacterial ribosomal protein bS18 family.</text>
</comment>
<keyword id="KW-1185">Reference proteome</keyword>
<keyword id="KW-0687">Ribonucleoprotein</keyword>
<keyword id="KW-0689">Ribosomal protein</keyword>
<keyword id="KW-0694">RNA-binding</keyword>
<keyword id="KW-0699">rRNA-binding</keyword>
<dbReference type="EMBL" id="CP000240">
    <property type="protein sequence ID" value="ABD02594.1"/>
    <property type="molecule type" value="Genomic_DNA"/>
</dbReference>
<dbReference type="RefSeq" id="WP_011433239.1">
    <property type="nucleotide sequence ID" value="NC_007776.1"/>
</dbReference>
<dbReference type="SMR" id="Q2JL28"/>
<dbReference type="STRING" id="321332.CYB_1633"/>
<dbReference type="KEGG" id="cyb:CYB_1633"/>
<dbReference type="eggNOG" id="COG0238">
    <property type="taxonomic scope" value="Bacteria"/>
</dbReference>
<dbReference type="HOGENOM" id="CLU_148710_2_3_3"/>
<dbReference type="OrthoDB" id="9812008at2"/>
<dbReference type="Proteomes" id="UP000001938">
    <property type="component" value="Chromosome"/>
</dbReference>
<dbReference type="GO" id="GO:0022627">
    <property type="term" value="C:cytosolic small ribosomal subunit"/>
    <property type="evidence" value="ECO:0007669"/>
    <property type="project" value="TreeGrafter"/>
</dbReference>
<dbReference type="GO" id="GO:0070181">
    <property type="term" value="F:small ribosomal subunit rRNA binding"/>
    <property type="evidence" value="ECO:0007669"/>
    <property type="project" value="TreeGrafter"/>
</dbReference>
<dbReference type="GO" id="GO:0003735">
    <property type="term" value="F:structural constituent of ribosome"/>
    <property type="evidence" value="ECO:0007669"/>
    <property type="project" value="InterPro"/>
</dbReference>
<dbReference type="GO" id="GO:0006412">
    <property type="term" value="P:translation"/>
    <property type="evidence" value="ECO:0007669"/>
    <property type="project" value="UniProtKB-UniRule"/>
</dbReference>
<dbReference type="Gene3D" id="4.10.640.10">
    <property type="entry name" value="Ribosomal protein S18"/>
    <property type="match status" value="1"/>
</dbReference>
<dbReference type="HAMAP" id="MF_00270">
    <property type="entry name" value="Ribosomal_bS18"/>
    <property type="match status" value="1"/>
</dbReference>
<dbReference type="InterPro" id="IPR001648">
    <property type="entry name" value="Ribosomal_bS18"/>
</dbReference>
<dbReference type="InterPro" id="IPR036870">
    <property type="entry name" value="Ribosomal_bS18_sf"/>
</dbReference>
<dbReference type="NCBIfam" id="TIGR00165">
    <property type="entry name" value="S18"/>
    <property type="match status" value="1"/>
</dbReference>
<dbReference type="PANTHER" id="PTHR13479">
    <property type="entry name" value="30S RIBOSOMAL PROTEIN S18"/>
    <property type="match status" value="1"/>
</dbReference>
<dbReference type="PANTHER" id="PTHR13479:SF40">
    <property type="entry name" value="SMALL RIBOSOMAL SUBUNIT PROTEIN BS18M"/>
    <property type="match status" value="1"/>
</dbReference>
<dbReference type="Pfam" id="PF01084">
    <property type="entry name" value="Ribosomal_S18"/>
    <property type="match status" value="1"/>
</dbReference>
<dbReference type="PRINTS" id="PR00974">
    <property type="entry name" value="RIBOSOMALS18"/>
</dbReference>
<dbReference type="SUPFAM" id="SSF46911">
    <property type="entry name" value="Ribosomal protein S18"/>
    <property type="match status" value="1"/>
</dbReference>
<gene>
    <name evidence="1" type="primary">rpsR</name>
    <name evidence="1" type="synonym">rps18</name>
    <name type="ordered locus">CYB_1633</name>
</gene>
<feature type="chain" id="PRO_1000003640" description="Small ribosomal subunit protein bS18">
    <location>
        <begin position="1"/>
        <end position="71"/>
    </location>
</feature>
<evidence type="ECO:0000255" key="1">
    <source>
        <dbReference type="HAMAP-Rule" id="MF_00270"/>
    </source>
</evidence>
<evidence type="ECO:0000305" key="2"/>